<name>DYR_STAAR</name>
<feature type="initiator methionine" description="Removed" evidence="1">
    <location>
        <position position="1"/>
    </location>
</feature>
<feature type="chain" id="PRO_0000186409" description="Dihydrofolate reductase">
    <location>
        <begin position="2"/>
        <end position="159"/>
    </location>
</feature>
<feature type="domain" description="DHFR" evidence="2">
    <location>
        <begin position="2"/>
        <end position="157"/>
    </location>
</feature>
<feature type="binding site" evidence="1">
    <location>
        <begin position="6"/>
        <end position="8"/>
    </location>
    <ligand>
        <name>substrate</name>
    </ligand>
</feature>
<feature type="binding site" evidence="1">
    <location>
        <begin position="7"/>
        <end position="8"/>
    </location>
    <ligand>
        <name>NADP(+)</name>
        <dbReference type="ChEBI" id="CHEBI:58349"/>
    </ligand>
</feature>
<feature type="binding site" evidence="1">
    <location>
        <begin position="15"/>
        <end position="20"/>
    </location>
    <ligand>
        <name>NADP(+)</name>
        <dbReference type="ChEBI" id="CHEBI:58349"/>
    </ligand>
</feature>
<feature type="binding site" evidence="1">
    <location>
        <position position="28"/>
    </location>
    <ligand>
        <name>substrate</name>
    </ligand>
</feature>
<feature type="binding site" evidence="1">
    <location>
        <begin position="44"/>
        <end position="47"/>
    </location>
    <ligand>
        <name>NADP(+)</name>
        <dbReference type="ChEBI" id="CHEBI:58349"/>
    </ligand>
</feature>
<feature type="binding site" evidence="1">
    <location>
        <position position="58"/>
    </location>
    <ligand>
        <name>substrate</name>
    </ligand>
</feature>
<feature type="binding site" evidence="1">
    <location>
        <begin position="63"/>
        <end position="66"/>
    </location>
    <ligand>
        <name>NADP(+)</name>
        <dbReference type="ChEBI" id="CHEBI:58349"/>
    </ligand>
</feature>
<feature type="binding site" evidence="1">
    <location>
        <begin position="93"/>
        <end position="98"/>
    </location>
    <ligand>
        <name>NADP(+)</name>
        <dbReference type="ChEBI" id="CHEBI:58349"/>
    </ligand>
</feature>
<feature type="binding site" evidence="1">
    <location>
        <position position="112"/>
    </location>
    <ligand>
        <name>substrate</name>
    </ligand>
</feature>
<proteinExistence type="inferred from homology"/>
<accession>Q6GGY1</accession>
<gene>
    <name type="primary">folA</name>
    <name type="ordered locus">SAR1439</name>
</gene>
<reference key="1">
    <citation type="journal article" date="2004" name="Proc. Natl. Acad. Sci. U.S.A.">
        <title>Complete genomes of two clinical Staphylococcus aureus strains: evidence for the rapid evolution of virulence and drug resistance.</title>
        <authorList>
            <person name="Holden M.T.G."/>
            <person name="Feil E.J."/>
            <person name="Lindsay J.A."/>
            <person name="Peacock S.J."/>
            <person name="Day N.P.J."/>
            <person name="Enright M.C."/>
            <person name="Foster T.J."/>
            <person name="Moore C.E."/>
            <person name="Hurst L."/>
            <person name="Atkin R."/>
            <person name="Barron A."/>
            <person name="Bason N."/>
            <person name="Bentley S.D."/>
            <person name="Chillingworth C."/>
            <person name="Chillingworth T."/>
            <person name="Churcher C."/>
            <person name="Clark L."/>
            <person name="Corton C."/>
            <person name="Cronin A."/>
            <person name="Doggett J."/>
            <person name="Dowd L."/>
            <person name="Feltwell T."/>
            <person name="Hance Z."/>
            <person name="Harris B."/>
            <person name="Hauser H."/>
            <person name="Holroyd S."/>
            <person name="Jagels K."/>
            <person name="James K.D."/>
            <person name="Lennard N."/>
            <person name="Line A."/>
            <person name="Mayes R."/>
            <person name="Moule S."/>
            <person name="Mungall K."/>
            <person name="Ormond D."/>
            <person name="Quail M.A."/>
            <person name="Rabbinowitsch E."/>
            <person name="Rutherford K.M."/>
            <person name="Sanders M."/>
            <person name="Sharp S."/>
            <person name="Simmonds M."/>
            <person name="Stevens K."/>
            <person name="Whitehead S."/>
            <person name="Barrell B.G."/>
            <person name="Spratt B.G."/>
            <person name="Parkhill J."/>
        </authorList>
    </citation>
    <scope>NUCLEOTIDE SEQUENCE [LARGE SCALE GENOMIC DNA]</scope>
    <source>
        <strain>MRSA252</strain>
    </source>
</reference>
<organism>
    <name type="scientific">Staphylococcus aureus (strain MRSA252)</name>
    <dbReference type="NCBI Taxonomy" id="282458"/>
    <lineage>
        <taxon>Bacteria</taxon>
        <taxon>Bacillati</taxon>
        <taxon>Bacillota</taxon>
        <taxon>Bacilli</taxon>
        <taxon>Bacillales</taxon>
        <taxon>Staphylococcaceae</taxon>
        <taxon>Staphylococcus</taxon>
    </lineage>
</organism>
<comment type="function">
    <text evidence="1">Key enzyme in folate metabolism. Catalyzes an essential reaction for de novo glycine and purine synthesis, and for DNA precursor synthesis (By similarity).</text>
</comment>
<comment type="catalytic activity">
    <reaction evidence="2">
        <text>(6S)-5,6,7,8-tetrahydrofolate + NADP(+) = 7,8-dihydrofolate + NADPH + H(+)</text>
        <dbReference type="Rhea" id="RHEA:15009"/>
        <dbReference type="ChEBI" id="CHEBI:15378"/>
        <dbReference type="ChEBI" id="CHEBI:57451"/>
        <dbReference type="ChEBI" id="CHEBI:57453"/>
        <dbReference type="ChEBI" id="CHEBI:57783"/>
        <dbReference type="ChEBI" id="CHEBI:58349"/>
        <dbReference type="EC" id="1.5.1.3"/>
    </reaction>
</comment>
<comment type="pathway">
    <text>Cofactor biosynthesis; tetrahydrofolate biosynthesis; 5,6,7,8-tetrahydrofolate from 7,8-dihydrofolate: step 1/1.</text>
</comment>
<comment type="similarity">
    <text evidence="3">Belongs to the dihydrofolate reductase family.</text>
</comment>
<protein>
    <recommendedName>
        <fullName>Dihydrofolate reductase</fullName>
        <shortName>DHFR</shortName>
        <ecNumber>1.5.1.3</ecNumber>
    </recommendedName>
</protein>
<sequence length="159" mass="18251">MTLSILVAHDLQRVIGFENQLPWHLPNDLKHVKKLSTGHTLVMGRKTFESIGKPLPNRRNVVLTSDTSFNVEGVDVIHSIEDIYQLPGHVFIFGGQTLFEEMIDKVDDMYITVIEGKFRGDTFFPPYTFEDWEVASSVEGKLDEKNTIPHTFLHLIRKK</sequence>
<keyword id="KW-0521">NADP</keyword>
<keyword id="KW-0554">One-carbon metabolism</keyword>
<keyword id="KW-0560">Oxidoreductase</keyword>
<evidence type="ECO:0000250" key="1"/>
<evidence type="ECO:0000255" key="2">
    <source>
        <dbReference type="PROSITE-ProRule" id="PRU00660"/>
    </source>
</evidence>
<evidence type="ECO:0000305" key="3"/>
<dbReference type="EC" id="1.5.1.3"/>
<dbReference type="EMBL" id="BX571856">
    <property type="protein sequence ID" value="CAG40436.1"/>
    <property type="molecule type" value="Genomic_DNA"/>
</dbReference>
<dbReference type="RefSeq" id="WP_000175746.1">
    <property type="nucleotide sequence ID" value="NC_002952.2"/>
</dbReference>
<dbReference type="SMR" id="Q6GGY1"/>
<dbReference type="KEGG" id="sar:SAR1439"/>
<dbReference type="HOGENOM" id="CLU_043966_5_1_9"/>
<dbReference type="UniPathway" id="UPA00077">
    <property type="reaction ID" value="UER00158"/>
</dbReference>
<dbReference type="Proteomes" id="UP000000596">
    <property type="component" value="Chromosome"/>
</dbReference>
<dbReference type="GO" id="GO:0005829">
    <property type="term" value="C:cytosol"/>
    <property type="evidence" value="ECO:0007669"/>
    <property type="project" value="TreeGrafter"/>
</dbReference>
<dbReference type="GO" id="GO:0004146">
    <property type="term" value="F:dihydrofolate reductase activity"/>
    <property type="evidence" value="ECO:0007669"/>
    <property type="project" value="UniProtKB-EC"/>
</dbReference>
<dbReference type="GO" id="GO:0050661">
    <property type="term" value="F:NADP binding"/>
    <property type="evidence" value="ECO:0007669"/>
    <property type="project" value="InterPro"/>
</dbReference>
<dbReference type="GO" id="GO:0046452">
    <property type="term" value="P:dihydrofolate metabolic process"/>
    <property type="evidence" value="ECO:0007669"/>
    <property type="project" value="TreeGrafter"/>
</dbReference>
<dbReference type="GO" id="GO:0046655">
    <property type="term" value="P:folic acid metabolic process"/>
    <property type="evidence" value="ECO:0007669"/>
    <property type="project" value="TreeGrafter"/>
</dbReference>
<dbReference type="GO" id="GO:0006730">
    <property type="term" value="P:one-carbon metabolic process"/>
    <property type="evidence" value="ECO:0007669"/>
    <property type="project" value="UniProtKB-KW"/>
</dbReference>
<dbReference type="GO" id="GO:0046654">
    <property type="term" value="P:tetrahydrofolate biosynthetic process"/>
    <property type="evidence" value="ECO:0007669"/>
    <property type="project" value="UniProtKB-UniPathway"/>
</dbReference>
<dbReference type="CDD" id="cd00209">
    <property type="entry name" value="DHFR"/>
    <property type="match status" value="1"/>
</dbReference>
<dbReference type="FunFam" id="3.40.430.10:FF:000001">
    <property type="entry name" value="Dihydrofolate reductase"/>
    <property type="match status" value="1"/>
</dbReference>
<dbReference type="Gene3D" id="3.40.430.10">
    <property type="entry name" value="Dihydrofolate Reductase, subunit A"/>
    <property type="match status" value="1"/>
</dbReference>
<dbReference type="InterPro" id="IPR012259">
    <property type="entry name" value="DHFR"/>
</dbReference>
<dbReference type="InterPro" id="IPR024072">
    <property type="entry name" value="DHFR-like_dom_sf"/>
</dbReference>
<dbReference type="InterPro" id="IPR017925">
    <property type="entry name" value="DHFR_CS"/>
</dbReference>
<dbReference type="InterPro" id="IPR001796">
    <property type="entry name" value="DHFR_dom"/>
</dbReference>
<dbReference type="PANTHER" id="PTHR48069">
    <property type="entry name" value="DIHYDROFOLATE REDUCTASE"/>
    <property type="match status" value="1"/>
</dbReference>
<dbReference type="PANTHER" id="PTHR48069:SF3">
    <property type="entry name" value="DIHYDROFOLATE REDUCTASE"/>
    <property type="match status" value="1"/>
</dbReference>
<dbReference type="Pfam" id="PF00186">
    <property type="entry name" value="DHFR_1"/>
    <property type="match status" value="1"/>
</dbReference>
<dbReference type="PIRSF" id="PIRSF000194">
    <property type="entry name" value="DHFR"/>
    <property type="match status" value="1"/>
</dbReference>
<dbReference type="PRINTS" id="PR00070">
    <property type="entry name" value="DHFR"/>
</dbReference>
<dbReference type="SUPFAM" id="SSF53597">
    <property type="entry name" value="Dihydrofolate reductase-like"/>
    <property type="match status" value="1"/>
</dbReference>
<dbReference type="PROSITE" id="PS00075">
    <property type="entry name" value="DHFR_1"/>
    <property type="match status" value="1"/>
</dbReference>
<dbReference type="PROSITE" id="PS51330">
    <property type="entry name" value="DHFR_2"/>
    <property type="match status" value="1"/>
</dbReference>